<evidence type="ECO:0000255" key="1">
    <source>
        <dbReference type="HAMAP-Rule" id="MF_01662"/>
    </source>
</evidence>
<feature type="chain" id="PRO_1000187188" description="L-fucose mutarotase">
    <location>
        <begin position="1"/>
        <end position="140"/>
    </location>
</feature>
<feature type="active site" description="Proton donor" evidence="1">
    <location>
        <position position="22"/>
    </location>
</feature>
<feature type="binding site" evidence="1">
    <location>
        <position position="30"/>
    </location>
    <ligand>
        <name>substrate</name>
    </ligand>
</feature>
<feature type="binding site" evidence="1">
    <location>
        <position position="107"/>
    </location>
    <ligand>
        <name>substrate</name>
    </ligand>
</feature>
<feature type="binding site" evidence="1">
    <location>
        <begin position="129"/>
        <end position="131"/>
    </location>
    <ligand>
        <name>substrate</name>
    </ligand>
</feature>
<gene>
    <name evidence="1" type="primary">fucU</name>
    <name type="ordered locus">KPN78578_30950</name>
    <name type="ORF">KPN_03155</name>
</gene>
<comment type="function">
    <text evidence="1">Involved in the anomeric conversion of L-fucose.</text>
</comment>
<comment type="catalytic activity">
    <reaction evidence="1">
        <text>alpha-L-fucose = beta-L-fucose</text>
        <dbReference type="Rhea" id="RHEA:25580"/>
        <dbReference type="ChEBI" id="CHEBI:42548"/>
        <dbReference type="ChEBI" id="CHEBI:42589"/>
        <dbReference type="EC" id="5.1.3.29"/>
    </reaction>
</comment>
<comment type="pathway">
    <text evidence="1">Carbohydrate metabolism; L-fucose metabolism.</text>
</comment>
<comment type="subunit">
    <text evidence="1">Homodecamer.</text>
</comment>
<comment type="subcellular location">
    <subcellularLocation>
        <location evidence="1">Cytoplasm</location>
    </subcellularLocation>
</comment>
<comment type="similarity">
    <text evidence="1">Belongs to the RbsD / FucU family. FucU mutarotase subfamily.</text>
</comment>
<keyword id="KW-0119">Carbohydrate metabolism</keyword>
<keyword id="KW-0963">Cytoplasm</keyword>
<keyword id="KW-0294">Fucose metabolism</keyword>
<keyword id="KW-0413">Isomerase</keyword>
<dbReference type="EC" id="5.1.3.29" evidence="1"/>
<dbReference type="EMBL" id="CP000647">
    <property type="protein sequence ID" value="ABR78556.1"/>
    <property type="molecule type" value="Genomic_DNA"/>
</dbReference>
<dbReference type="RefSeq" id="WP_015958900.1">
    <property type="nucleotide sequence ID" value="NC_009648.1"/>
</dbReference>
<dbReference type="SMR" id="A6TD85"/>
<dbReference type="STRING" id="272620.KPN_03155"/>
<dbReference type="PaxDb" id="272620-KPN_03155"/>
<dbReference type="EnsemblBacteria" id="ABR78556">
    <property type="protein sequence ID" value="ABR78556"/>
    <property type="gene ID" value="KPN_03155"/>
</dbReference>
<dbReference type="KEGG" id="kpn:KPN_03155"/>
<dbReference type="HOGENOM" id="CLU_120075_1_0_6"/>
<dbReference type="UniPathway" id="UPA00956"/>
<dbReference type="Proteomes" id="UP000000265">
    <property type="component" value="Chromosome"/>
</dbReference>
<dbReference type="GO" id="GO:0005737">
    <property type="term" value="C:cytoplasm"/>
    <property type="evidence" value="ECO:0007669"/>
    <property type="project" value="UniProtKB-SubCell"/>
</dbReference>
<dbReference type="GO" id="GO:0042806">
    <property type="term" value="F:fucose binding"/>
    <property type="evidence" value="ECO:0007669"/>
    <property type="project" value="InterPro"/>
</dbReference>
<dbReference type="GO" id="GO:0036373">
    <property type="term" value="F:L-fucose mutarotase activity"/>
    <property type="evidence" value="ECO:0007669"/>
    <property type="project" value="UniProtKB-EC"/>
</dbReference>
<dbReference type="GO" id="GO:0036065">
    <property type="term" value="P:fucosylation"/>
    <property type="evidence" value="ECO:0007669"/>
    <property type="project" value="TreeGrafter"/>
</dbReference>
<dbReference type="GO" id="GO:0042354">
    <property type="term" value="P:L-fucose metabolic process"/>
    <property type="evidence" value="ECO:0007669"/>
    <property type="project" value="UniProtKB-UniRule"/>
</dbReference>
<dbReference type="FunFam" id="3.40.1650.10:FF:000001">
    <property type="entry name" value="L-fucose mutarotase"/>
    <property type="match status" value="1"/>
</dbReference>
<dbReference type="Gene3D" id="3.40.1650.10">
    <property type="entry name" value="RbsD-like domain"/>
    <property type="match status" value="1"/>
</dbReference>
<dbReference type="HAMAP" id="MF_01662">
    <property type="entry name" value="L_fucose_rotase"/>
    <property type="match status" value="1"/>
</dbReference>
<dbReference type="InterPro" id="IPR023751">
    <property type="entry name" value="L-fucose_mutarotase"/>
</dbReference>
<dbReference type="InterPro" id="IPR023750">
    <property type="entry name" value="RbsD-like_sf"/>
</dbReference>
<dbReference type="InterPro" id="IPR050443">
    <property type="entry name" value="RbsD/FucU_mutarotase"/>
</dbReference>
<dbReference type="InterPro" id="IPR007721">
    <property type="entry name" value="RbsD_FucU"/>
</dbReference>
<dbReference type="NCBIfam" id="NF011949">
    <property type="entry name" value="PRK15420.1"/>
    <property type="match status" value="1"/>
</dbReference>
<dbReference type="PANTHER" id="PTHR31690">
    <property type="entry name" value="FUCOSE MUTAROTASE"/>
    <property type="match status" value="1"/>
</dbReference>
<dbReference type="PANTHER" id="PTHR31690:SF4">
    <property type="entry name" value="FUCOSE MUTAROTASE"/>
    <property type="match status" value="1"/>
</dbReference>
<dbReference type="Pfam" id="PF05025">
    <property type="entry name" value="RbsD_FucU"/>
    <property type="match status" value="1"/>
</dbReference>
<dbReference type="SUPFAM" id="SSF102546">
    <property type="entry name" value="RbsD-like"/>
    <property type="match status" value="1"/>
</dbReference>
<accession>A6TD85</accession>
<sequence length="140" mass="15338">MLKTISPLISPELLKVLAEMGHGDEIIFSDAHFPAHSMGPQVIRADGLRVSDLLQAIIPLFELDSYAPPVVMMAAVEGDALDPTVEQRYRQALSTQAPCPDIVRIDRFAFYDRAQKAFAIVITGECAKYGNILLKKGVTP</sequence>
<proteinExistence type="inferred from homology"/>
<organism>
    <name type="scientific">Klebsiella pneumoniae subsp. pneumoniae (strain ATCC 700721 / MGH 78578)</name>
    <dbReference type="NCBI Taxonomy" id="272620"/>
    <lineage>
        <taxon>Bacteria</taxon>
        <taxon>Pseudomonadati</taxon>
        <taxon>Pseudomonadota</taxon>
        <taxon>Gammaproteobacteria</taxon>
        <taxon>Enterobacterales</taxon>
        <taxon>Enterobacteriaceae</taxon>
        <taxon>Klebsiella/Raoultella group</taxon>
        <taxon>Klebsiella</taxon>
        <taxon>Klebsiella pneumoniae complex</taxon>
    </lineage>
</organism>
<protein>
    <recommendedName>
        <fullName evidence="1">L-fucose mutarotase</fullName>
        <ecNumber evidence="1">5.1.3.29</ecNumber>
    </recommendedName>
    <alternativeName>
        <fullName evidence="1">Fucose 1-epimerase</fullName>
    </alternativeName>
    <alternativeName>
        <fullName evidence="1">Type-2 mutarotase</fullName>
    </alternativeName>
</protein>
<reference key="1">
    <citation type="submission" date="2006-09" db="EMBL/GenBank/DDBJ databases">
        <authorList>
            <consortium name="The Klebsiella pneumonia Genome Sequencing Project"/>
            <person name="McClelland M."/>
            <person name="Sanderson E.K."/>
            <person name="Spieth J."/>
            <person name="Clifton W.S."/>
            <person name="Latreille P."/>
            <person name="Sabo A."/>
            <person name="Pepin K."/>
            <person name="Bhonagiri V."/>
            <person name="Porwollik S."/>
            <person name="Ali J."/>
            <person name="Wilson R.K."/>
        </authorList>
    </citation>
    <scope>NUCLEOTIDE SEQUENCE [LARGE SCALE GENOMIC DNA]</scope>
    <source>
        <strain>ATCC 700721 / MGH 78578</strain>
    </source>
</reference>
<name>FUCM_KLEP7</name>